<organism>
    <name type="scientific">Burkholderia pseudomallei (strain 1106a)</name>
    <dbReference type="NCBI Taxonomy" id="357348"/>
    <lineage>
        <taxon>Bacteria</taxon>
        <taxon>Pseudomonadati</taxon>
        <taxon>Pseudomonadota</taxon>
        <taxon>Betaproteobacteria</taxon>
        <taxon>Burkholderiales</taxon>
        <taxon>Burkholderiaceae</taxon>
        <taxon>Burkholderia</taxon>
        <taxon>pseudomallei group</taxon>
    </lineage>
</organism>
<feature type="chain" id="PRO_1000067134" description="HPr kinase/phosphorylase">
    <location>
        <begin position="1"/>
        <end position="322"/>
    </location>
</feature>
<feature type="region of interest" description="Important for the catalytic mechanism of both phosphorylation and dephosphorylation" evidence="1">
    <location>
        <begin position="209"/>
        <end position="218"/>
    </location>
</feature>
<feature type="region of interest" description="Important for the catalytic mechanism of dephosphorylation" evidence="1">
    <location>
        <begin position="271"/>
        <end position="276"/>
    </location>
</feature>
<feature type="active site" evidence="1">
    <location>
        <position position="146"/>
    </location>
</feature>
<feature type="active site" evidence="1">
    <location>
        <position position="167"/>
    </location>
</feature>
<feature type="active site" description="Proton acceptor; for phosphorylation activity. Proton donor; for dephosphorylation activity" evidence="1">
    <location>
        <position position="185"/>
    </location>
</feature>
<feature type="active site" evidence="1">
    <location>
        <position position="250"/>
    </location>
</feature>
<feature type="binding site" evidence="1">
    <location>
        <begin position="161"/>
        <end position="168"/>
    </location>
    <ligand>
        <name>ATP</name>
        <dbReference type="ChEBI" id="CHEBI:30616"/>
    </ligand>
</feature>
<feature type="binding site" evidence="1">
    <location>
        <position position="168"/>
    </location>
    <ligand>
        <name>Mg(2+)</name>
        <dbReference type="ChEBI" id="CHEBI:18420"/>
    </ligand>
</feature>
<feature type="binding site" evidence="1">
    <location>
        <position position="210"/>
    </location>
    <ligand>
        <name>Mg(2+)</name>
        <dbReference type="ChEBI" id="CHEBI:18420"/>
    </ligand>
</feature>
<reference key="1">
    <citation type="journal article" date="2010" name="Genome Biol. Evol.">
        <title>Continuing evolution of Burkholderia mallei through genome reduction and large-scale rearrangements.</title>
        <authorList>
            <person name="Losada L."/>
            <person name="Ronning C.M."/>
            <person name="DeShazer D."/>
            <person name="Woods D."/>
            <person name="Fedorova N."/>
            <person name="Kim H.S."/>
            <person name="Shabalina S.A."/>
            <person name="Pearson T.R."/>
            <person name="Brinkac L."/>
            <person name="Tan P."/>
            <person name="Nandi T."/>
            <person name="Crabtree J."/>
            <person name="Badger J."/>
            <person name="Beckstrom-Sternberg S."/>
            <person name="Saqib M."/>
            <person name="Schutzer S.E."/>
            <person name="Keim P."/>
            <person name="Nierman W.C."/>
        </authorList>
    </citation>
    <scope>NUCLEOTIDE SEQUENCE [LARGE SCALE GENOMIC DNA]</scope>
    <source>
        <strain>1106a</strain>
    </source>
</reference>
<evidence type="ECO:0000255" key="1">
    <source>
        <dbReference type="HAMAP-Rule" id="MF_01249"/>
    </source>
</evidence>
<protein>
    <recommendedName>
        <fullName evidence="1">HPr kinase/phosphorylase</fullName>
        <shortName evidence="1">HPrK/P</shortName>
        <ecNumber evidence="1">2.7.11.-</ecNumber>
        <ecNumber evidence="1">2.7.4.-</ecNumber>
    </recommendedName>
    <alternativeName>
        <fullName evidence="1">HPr(Ser) kinase/phosphorylase</fullName>
    </alternativeName>
</protein>
<sequence>MDTSSINAQSIFDDNAAMLKLSWLTGHEGWERGFSADTVANATSSADLVGHLNLIHPNRIQVLGEAEIDYYQRQTDEDRSRHMAELIALEPPFLVVAGGAAAPPELVLRCTRSSTPLFTTPMSAAAVIDSLRLYMSRILAPRATLHGVFLDILGMGVLLTGDSGLGKSELGLELISRGHGLVADDAVDFVRLGPDFVEGRCPPLLQNLLEVRGLGLLDIKTIFGETAVRRKMKLKLIVQLVRRPDGEFQRLPLESQTVDVLGLPISKVTIQVAAGRNLAVLVEAAVRNTILQLRGIDTLRDFMDRQRLAMQDPDSQFPGKLV</sequence>
<proteinExistence type="inferred from homology"/>
<gene>
    <name evidence="1" type="primary">hprK</name>
    <name type="ordered locus">BURPS1106A_0594</name>
</gene>
<dbReference type="EC" id="2.7.11.-" evidence="1"/>
<dbReference type="EC" id="2.7.4.-" evidence="1"/>
<dbReference type="EMBL" id="CP000572">
    <property type="protein sequence ID" value="ABN89052.1"/>
    <property type="molecule type" value="Genomic_DNA"/>
</dbReference>
<dbReference type="RefSeq" id="WP_004195225.1">
    <property type="nucleotide sequence ID" value="NC_009076.1"/>
</dbReference>
<dbReference type="SMR" id="A3NRA5"/>
<dbReference type="GeneID" id="93059051"/>
<dbReference type="KEGG" id="bpl:BURPS1106A_0594"/>
<dbReference type="HOGENOM" id="CLU_052030_0_2_4"/>
<dbReference type="Proteomes" id="UP000006738">
    <property type="component" value="Chromosome I"/>
</dbReference>
<dbReference type="GO" id="GO:0005524">
    <property type="term" value="F:ATP binding"/>
    <property type="evidence" value="ECO:0007669"/>
    <property type="project" value="UniProtKB-UniRule"/>
</dbReference>
<dbReference type="GO" id="GO:0000287">
    <property type="term" value="F:magnesium ion binding"/>
    <property type="evidence" value="ECO:0007669"/>
    <property type="project" value="UniProtKB-UniRule"/>
</dbReference>
<dbReference type="GO" id="GO:0000155">
    <property type="term" value="F:phosphorelay sensor kinase activity"/>
    <property type="evidence" value="ECO:0007669"/>
    <property type="project" value="InterPro"/>
</dbReference>
<dbReference type="GO" id="GO:0004674">
    <property type="term" value="F:protein serine/threonine kinase activity"/>
    <property type="evidence" value="ECO:0007669"/>
    <property type="project" value="UniProtKB-KW"/>
</dbReference>
<dbReference type="GO" id="GO:0004712">
    <property type="term" value="F:protein serine/threonine/tyrosine kinase activity"/>
    <property type="evidence" value="ECO:0007669"/>
    <property type="project" value="UniProtKB-UniRule"/>
</dbReference>
<dbReference type="GO" id="GO:0006109">
    <property type="term" value="P:regulation of carbohydrate metabolic process"/>
    <property type="evidence" value="ECO:0007669"/>
    <property type="project" value="UniProtKB-UniRule"/>
</dbReference>
<dbReference type="CDD" id="cd01918">
    <property type="entry name" value="HprK_C"/>
    <property type="match status" value="1"/>
</dbReference>
<dbReference type="FunFam" id="3.40.50.300:FF:000174">
    <property type="entry name" value="HPr kinase/phosphorylase"/>
    <property type="match status" value="1"/>
</dbReference>
<dbReference type="Gene3D" id="3.40.1390.20">
    <property type="entry name" value="HprK N-terminal domain-like"/>
    <property type="match status" value="1"/>
</dbReference>
<dbReference type="Gene3D" id="3.40.50.300">
    <property type="entry name" value="P-loop containing nucleotide triphosphate hydrolases"/>
    <property type="match status" value="1"/>
</dbReference>
<dbReference type="HAMAP" id="MF_01249">
    <property type="entry name" value="HPr_kinase"/>
    <property type="match status" value="1"/>
</dbReference>
<dbReference type="InterPro" id="IPR003755">
    <property type="entry name" value="HPr(Ser)_kin/Pase"/>
</dbReference>
<dbReference type="InterPro" id="IPR011104">
    <property type="entry name" value="Hpr_kin/Pase_C"/>
</dbReference>
<dbReference type="InterPro" id="IPR011126">
    <property type="entry name" value="Hpr_kin/Pase_Hpr_N"/>
</dbReference>
<dbReference type="InterPro" id="IPR027417">
    <property type="entry name" value="P-loop_NTPase"/>
</dbReference>
<dbReference type="InterPro" id="IPR028979">
    <property type="entry name" value="Ser_kin/Pase_Hpr-like_N_sf"/>
</dbReference>
<dbReference type="NCBIfam" id="TIGR00679">
    <property type="entry name" value="hpr-ser"/>
    <property type="match status" value="1"/>
</dbReference>
<dbReference type="PANTHER" id="PTHR30305:SF1">
    <property type="entry name" value="HPR KINASE_PHOSPHORYLASE"/>
    <property type="match status" value="1"/>
</dbReference>
<dbReference type="PANTHER" id="PTHR30305">
    <property type="entry name" value="PROTEIN YJDM-RELATED"/>
    <property type="match status" value="1"/>
</dbReference>
<dbReference type="Pfam" id="PF07475">
    <property type="entry name" value="Hpr_kinase_C"/>
    <property type="match status" value="1"/>
</dbReference>
<dbReference type="Pfam" id="PF02603">
    <property type="entry name" value="Hpr_kinase_N"/>
    <property type="match status" value="1"/>
</dbReference>
<dbReference type="SUPFAM" id="SSF75138">
    <property type="entry name" value="HprK N-terminal domain-like"/>
    <property type="match status" value="1"/>
</dbReference>
<dbReference type="SUPFAM" id="SSF53795">
    <property type="entry name" value="PEP carboxykinase-like"/>
    <property type="match status" value="1"/>
</dbReference>
<accession>A3NRA5</accession>
<name>HPRK_BURP0</name>
<keyword id="KW-0067">ATP-binding</keyword>
<keyword id="KW-0418">Kinase</keyword>
<keyword id="KW-0460">Magnesium</keyword>
<keyword id="KW-0479">Metal-binding</keyword>
<keyword id="KW-0511">Multifunctional enzyme</keyword>
<keyword id="KW-0547">Nucleotide-binding</keyword>
<keyword id="KW-0723">Serine/threonine-protein kinase</keyword>
<keyword id="KW-0808">Transferase</keyword>
<comment type="function">
    <text evidence="1">Catalyzes the ATP- as well as the pyrophosphate-dependent phosphorylation of a specific serine residue in HPr, a phosphocarrier protein of the phosphoenolpyruvate-dependent sugar phosphotransferase system (PTS). HprK/P also catalyzes the pyrophosphate-producing, inorganic phosphate-dependent dephosphorylation (phosphorolysis) of seryl-phosphorylated HPr (P-Ser-HPr).</text>
</comment>
<comment type="catalytic activity">
    <reaction evidence="1">
        <text>[HPr protein]-L-serine + ATP = [HPr protein]-O-phospho-L-serine + ADP + H(+)</text>
        <dbReference type="Rhea" id="RHEA:46600"/>
        <dbReference type="Rhea" id="RHEA-COMP:11602"/>
        <dbReference type="Rhea" id="RHEA-COMP:11603"/>
        <dbReference type="ChEBI" id="CHEBI:15378"/>
        <dbReference type="ChEBI" id="CHEBI:29999"/>
        <dbReference type="ChEBI" id="CHEBI:30616"/>
        <dbReference type="ChEBI" id="CHEBI:83421"/>
        <dbReference type="ChEBI" id="CHEBI:456216"/>
    </reaction>
</comment>
<comment type="catalytic activity">
    <reaction evidence="1">
        <text>[HPr protein]-O-phospho-L-serine + phosphate + H(+) = [HPr protein]-L-serine + diphosphate</text>
        <dbReference type="Rhea" id="RHEA:46604"/>
        <dbReference type="Rhea" id="RHEA-COMP:11602"/>
        <dbReference type="Rhea" id="RHEA-COMP:11603"/>
        <dbReference type="ChEBI" id="CHEBI:15378"/>
        <dbReference type="ChEBI" id="CHEBI:29999"/>
        <dbReference type="ChEBI" id="CHEBI:33019"/>
        <dbReference type="ChEBI" id="CHEBI:43474"/>
        <dbReference type="ChEBI" id="CHEBI:83421"/>
    </reaction>
</comment>
<comment type="cofactor">
    <cofactor evidence="1">
        <name>Mg(2+)</name>
        <dbReference type="ChEBI" id="CHEBI:18420"/>
    </cofactor>
</comment>
<comment type="subunit">
    <text evidence="1">Homohexamer.</text>
</comment>
<comment type="domain">
    <text evidence="1">The Walker A ATP-binding motif also binds Pi and PPi.</text>
</comment>
<comment type="miscellaneous">
    <text evidence="1">Both phosphorylation and phosphorolysis are carried out by the same active site and suggest a common mechanism for both reactions.</text>
</comment>
<comment type="similarity">
    <text evidence="1">Belongs to the HPrK/P family.</text>
</comment>